<gene>
    <name evidence="1" type="primary">DRE2</name>
    <name type="ORF">CTRG_00833</name>
</gene>
<name>DRE2_CANTT</name>
<feature type="chain" id="PRO_0000392383" description="Fe-S cluster assembly protein DRE2">
    <location>
        <begin position="1"/>
        <end position="344"/>
    </location>
</feature>
<feature type="region of interest" description="N-terminal SAM-like domain" evidence="1">
    <location>
        <begin position="1"/>
        <end position="160"/>
    </location>
</feature>
<feature type="region of interest" description="Disordered" evidence="2">
    <location>
        <begin position="154"/>
        <end position="179"/>
    </location>
</feature>
<feature type="region of interest" description="Linker" evidence="1">
    <location>
        <begin position="161"/>
        <end position="223"/>
    </location>
</feature>
<feature type="region of interest" description="Fe-S binding site A" evidence="1">
    <location>
        <begin position="231"/>
        <end position="248"/>
    </location>
</feature>
<feature type="region of interest" description="Fe-S binding site B" evidence="1">
    <location>
        <begin position="313"/>
        <end position="327"/>
    </location>
</feature>
<feature type="short sequence motif" description="Cx2C motif 1" evidence="1">
    <location>
        <begin position="313"/>
        <end position="316"/>
    </location>
</feature>
<feature type="short sequence motif" description="Cx2C motif 2" evidence="1">
    <location>
        <begin position="324"/>
        <end position="327"/>
    </location>
</feature>
<feature type="compositionally biased region" description="Polar residues" evidence="2">
    <location>
        <begin position="155"/>
        <end position="170"/>
    </location>
</feature>
<feature type="binding site" evidence="1">
    <location>
        <position position="231"/>
    </location>
    <ligand>
        <name>[2Fe-2S] cluster</name>
        <dbReference type="ChEBI" id="CHEBI:190135"/>
    </ligand>
</feature>
<feature type="binding site" evidence="1">
    <location>
        <position position="243"/>
    </location>
    <ligand>
        <name>[2Fe-2S] cluster</name>
        <dbReference type="ChEBI" id="CHEBI:190135"/>
    </ligand>
</feature>
<feature type="binding site" evidence="1">
    <location>
        <position position="246"/>
    </location>
    <ligand>
        <name>[2Fe-2S] cluster</name>
        <dbReference type="ChEBI" id="CHEBI:190135"/>
    </ligand>
</feature>
<feature type="binding site" evidence="1">
    <location>
        <position position="248"/>
    </location>
    <ligand>
        <name>[2Fe-2S] cluster</name>
        <dbReference type="ChEBI" id="CHEBI:190135"/>
    </ligand>
</feature>
<feature type="binding site" evidence="1">
    <location>
        <position position="313"/>
    </location>
    <ligand>
        <name>[4Fe-4S] cluster</name>
        <dbReference type="ChEBI" id="CHEBI:49883"/>
    </ligand>
</feature>
<feature type="binding site" evidence="1">
    <location>
        <position position="316"/>
    </location>
    <ligand>
        <name>[4Fe-4S] cluster</name>
        <dbReference type="ChEBI" id="CHEBI:49883"/>
    </ligand>
</feature>
<feature type="binding site" evidence="1">
    <location>
        <position position="324"/>
    </location>
    <ligand>
        <name>[4Fe-4S] cluster</name>
        <dbReference type="ChEBI" id="CHEBI:49883"/>
    </ligand>
</feature>
<feature type="binding site" evidence="1">
    <location>
        <position position="327"/>
    </location>
    <ligand>
        <name>[4Fe-4S] cluster</name>
        <dbReference type="ChEBI" id="CHEBI:49883"/>
    </ligand>
</feature>
<evidence type="ECO:0000255" key="1">
    <source>
        <dbReference type="HAMAP-Rule" id="MF_03115"/>
    </source>
</evidence>
<evidence type="ECO:0000256" key="2">
    <source>
        <dbReference type="SAM" id="MobiDB-lite"/>
    </source>
</evidence>
<comment type="function">
    <text evidence="1">Component of the cytosolic iron-sulfur (Fe-S) protein assembly (CIA) machinery required for the maturation of extramitochondrial Fe-S proteins. Part of an electron transfer chain functioning in an early step of cytosolic Fe-S biogenesis, facilitating the de novo assembly of a [4Fe-4S] cluster on the scaffold complex CFD1-NBP35. Electrons are transferred to DRE2 from NADPH via the FAD- and FMN-containing protein TAH18. TAH18-DRE2 are also required for the assembly of the diferric tyrosyl radical cofactor of ribonucleotide reductase (RNR), probably by providing electrons for reduction during radical cofactor maturation in the catalytic small subunit RNR2.</text>
</comment>
<comment type="cofactor">
    <cofactor evidence="1">
        <name>[2Fe-2S] cluster</name>
        <dbReference type="ChEBI" id="CHEBI:190135"/>
    </cofactor>
</comment>
<comment type="cofactor">
    <cofactor evidence="1">
        <name>[4Fe-4S] cluster</name>
        <dbReference type="ChEBI" id="CHEBI:49883"/>
    </cofactor>
</comment>
<comment type="subunit">
    <text evidence="1">Monomer. Interacts with TAH18. Interacts with MIA40.</text>
</comment>
<comment type="subcellular location">
    <subcellularLocation>
        <location evidence="1">Cytoplasm</location>
    </subcellularLocation>
    <subcellularLocation>
        <location evidence="1">Mitochondrion intermembrane space</location>
    </subcellularLocation>
</comment>
<comment type="domain">
    <text evidence="1">The C-terminal domain binds 2 Fe-S clusters but is otherwise mostly in an intrinsically disordered conformation.</text>
</comment>
<comment type="domain">
    <text evidence="1">The N-terminal domain has structural similarity with S-adenosyl-L-methionine-dependent methyltransferases, but does not bind S-adenosyl-L-methionine. It is required for correct assembly of the 2 Fe-S clusters.</text>
</comment>
<comment type="domain">
    <text evidence="1">The twin Cx2C motifs are involved in the recognition by the mitochondrial MIA40-ERV1 disulfide relay system. The formation of 2 disulfide bonds in the Cx2C motifs through dithiol/disulfide exchange reactions effectively traps the protein in the mitochondrial intermembrane space.</text>
</comment>
<comment type="similarity">
    <text evidence="1">Belongs to the anamorsin family.</text>
</comment>
<keyword id="KW-0001">2Fe-2S</keyword>
<keyword id="KW-0004">4Fe-4S</keyword>
<keyword id="KW-0963">Cytoplasm</keyword>
<keyword id="KW-0408">Iron</keyword>
<keyword id="KW-0411">Iron-sulfur</keyword>
<keyword id="KW-0479">Metal-binding</keyword>
<keyword id="KW-0496">Mitochondrion</keyword>
<keyword id="KW-1185">Reference proteome</keyword>
<reference key="1">
    <citation type="journal article" date="2009" name="Nature">
        <title>Evolution of pathogenicity and sexual reproduction in eight Candida genomes.</title>
        <authorList>
            <person name="Butler G."/>
            <person name="Rasmussen M.D."/>
            <person name="Lin M.F."/>
            <person name="Santos M.A.S."/>
            <person name="Sakthikumar S."/>
            <person name="Munro C.A."/>
            <person name="Rheinbay E."/>
            <person name="Grabherr M."/>
            <person name="Forche A."/>
            <person name="Reedy J.L."/>
            <person name="Agrafioti I."/>
            <person name="Arnaud M.B."/>
            <person name="Bates S."/>
            <person name="Brown A.J.P."/>
            <person name="Brunke S."/>
            <person name="Costanzo M.C."/>
            <person name="Fitzpatrick D.A."/>
            <person name="de Groot P.W.J."/>
            <person name="Harris D."/>
            <person name="Hoyer L.L."/>
            <person name="Hube B."/>
            <person name="Klis F.M."/>
            <person name="Kodira C."/>
            <person name="Lennard N."/>
            <person name="Logue M.E."/>
            <person name="Martin R."/>
            <person name="Neiman A.M."/>
            <person name="Nikolaou E."/>
            <person name="Quail M.A."/>
            <person name="Quinn J."/>
            <person name="Santos M.C."/>
            <person name="Schmitzberger F.F."/>
            <person name="Sherlock G."/>
            <person name="Shah P."/>
            <person name="Silverstein K.A.T."/>
            <person name="Skrzypek M.S."/>
            <person name="Soll D."/>
            <person name="Staggs R."/>
            <person name="Stansfield I."/>
            <person name="Stumpf M.P.H."/>
            <person name="Sudbery P.E."/>
            <person name="Srikantha T."/>
            <person name="Zeng Q."/>
            <person name="Berman J."/>
            <person name="Berriman M."/>
            <person name="Heitman J."/>
            <person name="Gow N.A.R."/>
            <person name="Lorenz M.C."/>
            <person name="Birren B.W."/>
            <person name="Kellis M."/>
            <person name="Cuomo C.A."/>
        </authorList>
    </citation>
    <scope>NUCLEOTIDE SEQUENCE [LARGE SCALE GENOMIC DNA]</scope>
    <source>
        <strain>ATCC MYA-3404 / T1</strain>
    </source>
</reference>
<sequence>MTSNILLLLHPTVVTDQHIVENIKLKISNTHKDFHLSQTTIDRLTQGSIEFDNNSFDEIIYINPNEEQYREIPNSLMKLIFDLLKLNGKFTGDLPTDQNLDVLMNGFLIINQNEWNKPQPEETVVTLKKKSTTTNNNSNTSTIKKSFPMFKKLNNDNASTPGLTDSSAGTSEDETATVSNKRKLVESKLVYFSDDDDDDDYDGSSDGEDLINENDLIAESNKYKIIVPKKCELPNGKKRKKACKDCTCGLKELEEEEIKSQGKLQDTVLANMAQSATIEAIKIEERMKKNKIKFTEEDLSEIDFTVAGKTGGCGSCSLGDAFRCDGCPFLGLPPFKPGEVVRID</sequence>
<dbReference type="EMBL" id="GG692395">
    <property type="protein sequence ID" value="EER36094.1"/>
    <property type="molecule type" value="Genomic_DNA"/>
</dbReference>
<dbReference type="RefSeq" id="XP_002546052.1">
    <property type="nucleotide sequence ID" value="XM_002546006.1"/>
</dbReference>
<dbReference type="SMR" id="C5M444"/>
<dbReference type="STRING" id="294747.C5M444"/>
<dbReference type="EnsemblFungi" id="CTRG_00833-t43_1">
    <property type="protein sequence ID" value="CTRG_00833-t43_1-p1"/>
    <property type="gene ID" value="CTRG_00833"/>
</dbReference>
<dbReference type="GeneID" id="8297645"/>
<dbReference type="KEGG" id="ctp:CTRG_00833"/>
<dbReference type="VEuPathDB" id="FungiDB:CTRG_00833"/>
<dbReference type="eggNOG" id="KOG4020">
    <property type="taxonomic scope" value="Eukaryota"/>
</dbReference>
<dbReference type="HOGENOM" id="CLU_067152_0_0_1"/>
<dbReference type="OrthoDB" id="311633at2759"/>
<dbReference type="Proteomes" id="UP000002037">
    <property type="component" value="Unassembled WGS sequence"/>
</dbReference>
<dbReference type="GO" id="GO:0097361">
    <property type="term" value="C:cytosolic [4Fe-4S] assembly targeting complex"/>
    <property type="evidence" value="ECO:0007669"/>
    <property type="project" value="EnsemblFungi"/>
</dbReference>
<dbReference type="GO" id="GO:0005758">
    <property type="term" value="C:mitochondrial intermembrane space"/>
    <property type="evidence" value="ECO:0007669"/>
    <property type="project" value="UniProtKB-SubCell"/>
</dbReference>
<dbReference type="GO" id="GO:0051537">
    <property type="term" value="F:2 iron, 2 sulfur cluster binding"/>
    <property type="evidence" value="ECO:0007669"/>
    <property type="project" value="UniProtKB-UniRule"/>
</dbReference>
<dbReference type="GO" id="GO:0051539">
    <property type="term" value="F:4 iron, 4 sulfur cluster binding"/>
    <property type="evidence" value="ECO:0007669"/>
    <property type="project" value="UniProtKB-KW"/>
</dbReference>
<dbReference type="GO" id="GO:0009055">
    <property type="term" value="F:electron transfer activity"/>
    <property type="evidence" value="ECO:0007669"/>
    <property type="project" value="UniProtKB-UniRule"/>
</dbReference>
<dbReference type="GO" id="GO:0046872">
    <property type="term" value="F:metal ion binding"/>
    <property type="evidence" value="ECO:0007669"/>
    <property type="project" value="UniProtKB-KW"/>
</dbReference>
<dbReference type="GO" id="GO:0034599">
    <property type="term" value="P:cellular response to oxidative stress"/>
    <property type="evidence" value="ECO:0007669"/>
    <property type="project" value="EnsemblFungi"/>
</dbReference>
<dbReference type="GO" id="GO:0016226">
    <property type="term" value="P:iron-sulfur cluster assembly"/>
    <property type="evidence" value="ECO:0007669"/>
    <property type="project" value="UniProtKB-UniRule"/>
</dbReference>
<dbReference type="GO" id="GO:1901299">
    <property type="term" value="P:negative regulation of hydrogen peroxide-mediated programmed cell death"/>
    <property type="evidence" value="ECO:0007669"/>
    <property type="project" value="EnsemblFungi"/>
</dbReference>
<dbReference type="GO" id="GO:0045019">
    <property type="term" value="P:negative regulation of nitric oxide biosynthetic process"/>
    <property type="evidence" value="ECO:0007669"/>
    <property type="project" value="EnsemblFungi"/>
</dbReference>
<dbReference type="Gene3D" id="3.40.50.11000">
    <property type="entry name" value="Fe-S cluster assembly protein Dre2, N-terminal domain"/>
    <property type="match status" value="1"/>
</dbReference>
<dbReference type="HAMAP" id="MF_03115">
    <property type="entry name" value="Anamorsin"/>
    <property type="match status" value="1"/>
</dbReference>
<dbReference type="InterPro" id="IPR007785">
    <property type="entry name" value="Anamorsin"/>
</dbReference>
<dbReference type="InterPro" id="IPR046408">
    <property type="entry name" value="CIAPIN1"/>
</dbReference>
<dbReference type="InterPro" id="IPR031838">
    <property type="entry name" value="Dre2_N"/>
</dbReference>
<dbReference type="PANTHER" id="PTHR13273">
    <property type="entry name" value="ANAMORSIN"/>
    <property type="match status" value="1"/>
</dbReference>
<dbReference type="PANTHER" id="PTHR13273:SF14">
    <property type="entry name" value="ANAMORSIN"/>
    <property type="match status" value="1"/>
</dbReference>
<dbReference type="Pfam" id="PF05093">
    <property type="entry name" value="CIAPIN1"/>
    <property type="match status" value="1"/>
</dbReference>
<dbReference type="Pfam" id="PF16803">
    <property type="entry name" value="DRE2_N"/>
    <property type="match status" value="1"/>
</dbReference>
<proteinExistence type="inferred from homology"/>
<accession>C5M444</accession>
<organism>
    <name type="scientific">Candida tropicalis (strain ATCC MYA-3404 / T1)</name>
    <name type="common">Yeast</name>
    <dbReference type="NCBI Taxonomy" id="294747"/>
    <lineage>
        <taxon>Eukaryota</taxon>
        <taxon>Fungi</taxon>
        <taxon>Dikarya</taxon>
        <taxon>Ascomycota</taxon>
        <taxon>Saccharomycotina</taxon>
        <taxon>Pichiomycetes</taxon>
        <taxon>Debaryomycetaceae</taxon>
        <taxon>Candida/Lodderomyces clade</taxon>
        <taxon>Candida</taxon>
    </lineage>
</organism>
<protein>
    <recommendedName>
        <fullName evidence="1">Fe-S cluster assembly protein DRE2</fullName>
    </recommendedName>
    <alternativeName>
        <fullName evidence="1">Anamorsin homolog</fullName>
    </alternativeName>
</protein>